<protein>
    <recommendedName>
        <fullName evidence="1">DNA-directed RNA polymerase subunit beta'</fullName>
        <shortName evidence="1">RNAP subunit beta'</shortName>
        <ecNumber evidence="1">2.7.7.6</ecNumber>
    </recommendedName>
    <alternativeName>
        <fullName evidence="1">RNA polymerase subunit beta'</fullName>
    </alternativeName>
    <alternativeName>
        <fullName evidence="1">Transcriptase subunit beta'</fullName>
    </alternativeName>
</protein>
<name>RPOC_STRPI</name>
<feature type="chain" id="PRO_1000141795" description="DNA-directed RNA polymerase subunit beta'">
    <location>
        <begin position="1"/>
        <end position="1225"/>
    </location>
</feature>
<feature type="binding site" evidence="1">
    <location>
        <position position="60"/>
    </location>
    <ligand>
        <name>Zn(2+)</name>
        <dbReference type="ChEBI" id="CHEBI:29105"/>
        <label>1</label>
    </ligand>
</feature>
<feature type="binding site" evidence="1">
    <location>
        <position position="62"/>
    </location>
    <ligand>
        <name>Zn(2+)</name>
        <dbReference type="ChEBI" id="CHEBI:29105"/>
        <label>1</label>
    </ligand>
</feature>
<feature type="binding site" evidence="1">
    <location>
        <position position="75"/>
    </location>
    <ligand>
        <name>Zn(2+)</name>
        <dbReference type="ChEBI" id="CHEBI:29105"/>
        <label>1</label>
    </ligand>
</feature>
<feature type="binding site" evidence="1">
    <location>
        <position position="78"/>
    </location>
    <ligand>
        <name>Zn(2+)</name>
        <dbReference type="ChEBI" id="CHEBI:29105"/>
        <label>1</label>
    </ligand>
</feature>
<feature type="binding site" evidence="1">
    <location>
        <position position="450"/>
    </location>
    <ligand>
        <name>Mg(2+)</name>
        <dbReference type="ChEBI" id="CHEBI:18420"/>
    </ligand>
</feature>
<feature type="binding site" evidence="1">
    <location>
        <position position="452"/>
    </location>
    <ligand>
        <name>Mg(2+)</name>
        <dbReference type="ChEBI" id="CHEBI:18420"/>
    </ligand>
</feature>
<feature type="binding site" evidence="1">
    <location>
        <position position="454"/>
    </location>
    <ligand>
        <name>Mg(2+)</name>
        <dbReference type="ChEBI" id="CHEBI:18420"/>
    </ligand>
</feature>
<feature type="binding site" evidence="1">
    <location>
        <position position="818"/>
    </location>
    <ligand>
        <name>Zn(2+)</name>
        <dbReference type="ChEBI" id="CHEBI:29105"/>
        <label>2</label>
    </ligand>
</feature>
<feature type="binding site" evidence="1">
    <location>
        <position position="892"/>
    </location>
    <ligand>
        <name>Zn(2+)</name>
        <dbReference type="ChEBI" id="CHEBI:29105"/>
        <label>2</label>
    </ligand>
</feature>
<feature type="binding site" evidence="1">
    <location>
        <position position="899"/>
    </location>
    <ligand>
        <name>Zn(2+)</name>
        <dbReference type="ChEBI" id="CHEBI:29105"/>
        <label>2</label>
    </ligand>
</feature>
<feature type="binding site" evidence="1">
    <location>
        <position position="902"/>
    </location>
    <ligand>
        <name>Zn(2+)</name>
        <dbReference type="ChEBI" id="CHEBI:29105"/>
        <label>2</label>
    </ligand>
</feature>
<reference key="1">
    <citation type="journal article" date="2010" name="Genome Biol.">
        <title>Structure and dynamics of the pan-genome of Streptococcus pneumoniae and closely related species.</title>
        <authorList>
            <person name="Donati C."/>
            <person name="Hiller N.L."/>
            <person name="Tettelin H."/>
            <person name="Muzzi A."/>
            <person name="Croucher N.J."/>
            <person name="Angiuoli S.V."/>
            <person name="Oggioni M."/>
            <person name="Dunning Hotopp J.C."/>
            <person name="Hu F.Z."/>
            <person name="Riley D.R."/>
            <person name="Covacci A."/>
            <person name="Mitchell T.J."/>
            <person name="Bentley S.D."/>
            <person name="Kilian M."/>
            <person name="Ehrlich G.D."/>
            <person name="Rappuoli R."/>
            <person name="Moxon E.R."/>
            <person name="Masignani V."/>
        </authorList>
    </citation>
    <scope>NUCLEOTIDE SEQUENCE [LARGE SCALE GENOMIC DNA]</scope>
    <source>
        <strain>Hungary19A-6</strain>
    </source>
</reference>
<accession>B1I8R3</accession>
<evidence type="ECO:0000255" key="1">
    <source>
        <dbReference type="HAMAP-Rule" id="MF_01322"/>
    </source>
</evidence>
<comment type="function">
    <text evidence="1">DNA-dependent RNA polymerase catalyzes the transcription of DNA into RNA using the four ribonucleoside triphosphates as substrates.</text>
</comment>
<comment type="catalytic activity">
    <reaction evidence="1">
        <text>RNA(n) + a ribonucleoside 5'-triphosphate = RNA(n+1) + diphosphate</text>
        <dbReference type="Rhea" id="RHEA:21248"/>
        <dbReference type="Rhea" id="RHEA-COMP:14527"/>
        <dbReference type="Rhea" id="RHEA-COMP:17342"/>
        <dbReference type="ChEBI" id="CHEBI:33019"/>
        <dbReference type="ChEBI" id="CHEBI:61557"/>
        <dbReference type="ChEBI" id="CHEBI:140395"/>
        <dbReference type="EC" id="2.7.7.6"/>
    </reaction>
</comment>
<comment type="cofactor">
    <cofactor evidence="1">
        <name>Mg(2+)</name>
        <dbReference type="ChEBI" id="CHEBI:18420"/>
    </cofactor>
    <text evidence="1">Binds 1 Mg(2+) ion per subunit.</text>
</comment>
<comment type="cofactor">
    <cofactor evidence="1">
        <name>Zn(2+)</name>
        <dbReference type="ChEBI" id="CHEBI:29105"/>
    </cofactor>
    <text evidence="1">Binds 2 Zn(2+) ions per subunit.</text>
</comment>
<comment type="subunit">
    <text evidence="1">The RNAP catalytic core consists of 2 alpha, 1 beta, 1 beta' and 1 omega subunit. When a sigma factor is associated with the core the holoenzyme is formed, which can initiate transcription.</text>
</comment>
<comment type="similarity">
    <text evidence="1">Belongs to the RNA polymerase beta' chain family.</text>
</comment>
<organism>
    <name type="scientific">Streptococcus pneumoniae (strain Hungary19A-6)</name>
    <dbReference type="NCBI Taxonomy" id="487214"/>
    <lineage>
        <taxon>Bacteria</taxon>
        <taxon>Bacillati</taxon>
        <taxon>Bacillota</taxon>
        <taxon>Bacilli</taxon>
        <taxon>Lactobacillales</taxon>
        <taxon>Streptococcaceae</taxon>
        <taxon>Streptococcus</taxon>
    </lineage>
</organism>
<dbReference type="EC" id="2.7.7.6" evidence="1"/>
<dbReference type="EMBL" id="CP000936">
    <property type="protein sequence ID" value="ACA36707.1"/>
    <property type="molecule type" value="Genomic_DNA"/>
</dbReference>
<dbReference type="RefSeq" id="WP_000228766.1">
    <property type="nucleotide sequence ID" value="NC_010380.1"/>
</dbReference>
<dbReference type="SMR" id="B1I8R3"/>
<dbReference type="KEGG" id="spv:SPH_2101"/>
<dbReference type="HOGENOM" id="CLU_000524_3_1_9"/>
<dbReference type="Proteomes" id="UP000002163">
    <property type="component" value="Chromosome"/>
</dbReference>
<dbReference type="GO" id="GO:0000428">
    <property type="term" value="C:DNA-directed RNA polymerase complex"/>
    <property type="evidence" value="ECO:0007669"/>
    <property type="project" value="UniProtKB-KW"/>
</dbReference>
<dbReference type="GO" id="GO:0003677">
    <property type="term" value="F:DNA binding"/>
    <property type="evidence" value="ECO:0007669"/>
    <property type="project" value="UniProtKB-UniRule"/>
</dbReference>
<dbReference type="GO" id="GO:0003899">
    <property type="term" value="F:DNA-directed RNA polymerase activity"/>
    <property type="evidence" value="ECO:0007669"/>
    <property type="project" value="UniProtKB-UniRule"/>
</dbReference>
<dbReference type="GO" id="GO:0000287">
    <property type="term" value="F:magnesium ion binding"/>
    <property type="evidence" value="ECO:0007669"/>
    <property type="project" value="UniProtKB-UniRule"/>
</dbReference>
<dbReference type="GO" id="GO:0008270">
    <property type="term" value="F:zinc ion binding"/>
    <property type="evidence" value="ECO:0007669"/>
    <property type="project" value="UniProtKB-UniRule"/>
</dbReference>
<dbReference type="GO" id="GO:0006351">
    <property type="term" value="P:DNA-templated transcription"/>
    <property type="evidence" value="ECO:0007669"/>
    <property type="project" value="UniProtKB-UniRule"/>
</dbReference>
<dbReference type="CDD" id="cd02655">
    <property type="entry name" value="RNAP_beta'_C"/>
    <property type="match status" value="1"/>
</dbReference>
<dbReference type="CDD" id="cd01609">
    <property type="entry name" value="RNAP_beta'_N"/>
    <property type="match status" value="1"/>
</dbReference>
<dbReference type="FunFam" id="1.10.150.390:FF:000002">
    <property type="entry name" value="DNA-directed RNA polymerase subunit beta"/>
    <property type="match status" value="1"/>
</dbReference>
<dbReference type="FunFam" id="4.10.860.120:FF:000001">
    <property type="entry name" value="DNA-directed RNA polymerase subunit beta"/>
    <property type="match status" value="1"/>
</dbReference>
<dbReference type="Gene3D" id="1.10.132.30">
    <property type="match status" value="1"/>
</dbReference>
<dbReference type="Gene3D" id="1.10.150.390">
    <property type="match status" value="1"/>
</dbReference>
<dbReference type="Gene3D" id="1.10.1790.20">
    <property type="match status" value="1"/>
</dbReference>
<dbReference type="Gene3D" id="1.10.40.90">
    <property type="match status" value="1"/>
</dbReference>
<dbReference type="Gene3D" id="2.40.40.20">
    <property type="match status" value="1"/>
</dbReference>
<dbReference type="Gene3D" id="2.40.50.100">
    <property type="match status" value="1"/>
</dbReference>
<dbReference type="Gene3D" id="4.10.860.120">
    <property type="entry name" value="RNA polymerase II, clamp domain"/>
    <property type="match status" value="1"/>
</dbReference>
<dbReference type="Gene3D" id="1.10.274.100">
    <property type="entry name" value="RNA polymerase Rpb1, domain 3"/>
    <property type="match status" value="1"/>
</dbReference>
<dbReference type="HAMAP" id="MF_01322">
    <property type="entry name" value="RNApol_bact_RpoC"/>
    <property type="match status" value="1"/>
</dbReference>
<dbReference type="InterPro" id="IPR045867">
    <property type="entry name" value="DNA-dir_RpoC_beta_prime"/>
</dbReference>
<dbReference type="InterPro" id="IPR012754">
    <property type="entry name" value="DNA-dir_RpoC_beta_prime_bact"/>
</dbReference>
<dbReference type="InterPro" id="IPR000722">
    <property type="entry name" value="RNA_pol_asu"/>
</dbReference>
<dbReference type="InterPro" id="IPR006592">
    <property type="entry name" value="RNA_pol_N"/>
</dbReference>
<dbReference type="InterPro" id="IPR007080">
    <property type="entry name" value="RNA_pol_Rpb1_1"/>
</dbReference>
<dbReference type="InterPro" id="IPR007066">
    <property type="entry name" value="RNA_pol_Rpb1_3"/>
</dbReference>
<dbReference type="InterPro" id="IPR042102">
    <property type="entry name" value="RNA_pol_Rpb1_3_sf"/>
</dbReference>
<dbReference type="InterPro" id="IPR007083">
    <property type="entry name" value="RNA_pol_Rpb1_4"/>
</dbReference>
<dbReference type="InterPro" id="IPR007081">
    <property type="entry name" value="RNA_pol_Rpb1_5"/>
</dbReference>
<dbReference type="InterPro" id="IPR044893">
    <property type="entry name" value="RNA_pol_Rpb1_clamp_domain"/>
</dbReference>
<dbReference type="InterPro" id="IPR038120">
    <property type="entry name" value="Rpb1_funnel_sf"/>
</dbReference>
<dbReference type="NCBIfam" id="TIGR02386">
    <property type="entry name" value="rpoC_TIGR"/>
    <property type="match status" value="1"/>
</dbReference>
<dbReference type="PANTHER" id="PTHR19376">
    <property type="entry name" value="DNA-DIRECTED RNA POLYMERASE"/>
    <property type="match status" value="1"/>
</dbReference>
<dbReference type="PANTHER" id="PTHR19376:SF54">
    <property type="entry name" value="DNA-DIRECTED RNA POLYMERASE SUBUNIT BETA"/>
    <property type="match status" value="1"/>
</dbReference>
<dbReference type="Pfam" id="PF04997">
    <property type="entry name" value="RNA_pol_Rpb1_1"/>
    <property type="match status" value="1"/>
</dbReference>
<dbReference type="Pfam" id="PF00623">
    <property type="entry name" value="RNA_pol_Rpb1_2"/>
    <property type="match status" value="2"/>
</dbReference>
<dbReference type="Pfam" id="PF04983">
    <property type="entry name" value="RNA_pol_Rpb1_3"/>
    <property type="match status" value="1"/>
</dbReference>
<dbReference type="Pfam" id="PF05000">
    <property type="entry name" value="RNA_pol_Rpb1_4"/>
    <property type="match status" value="1"/>
</dbReference>
<dbReference type="Pfam" id="PF04998">
    <property type="entry name" value="RNA_pol_Rpb1_5"/>
    <property type="match status" value="1"/>
</dbReference>
<dbReference type="SMART" id="SM00663">
    <property type="entry name" value="RPOLA_N"/>
    <property type="match status" value="1"/>
</dbReference>
<dbReference type="SUPFAM" id="SSF64484">
    <property type="entry name" value="beta and beta-prime subunits of DNA dependent RNA-polymerase"/>
    <property type="match status" value="1"/>
</dbReference>
<keyword id="KW-0240">DNA-directed RNA polymerase</keyword>
<keyword id="KW-0460">Magnesium</keyword>
<keyword id="KW-0479">Metal-binding</keyword>
<keyword id="KW-0548">Nucleotidyltransferase</keyword>
<keyword id="KW-0804">Transcription</keyword>
<keyword id="KW-0808">Transferase</keyword>
<keyword id="KW-0862">Zinc</keyword>
<gene>
    <name evidence="1" type="primary">rpoC</name>
    <name type="ordered locus">SPH_2101</name>
</gene>
<sequence length="1225" mass="136989">MVDVNRFKSMQITLASPSKVRSWSYGEVKKPETINYRTLKPEREGLFDEVIFGPTKDWECACGKYKRIRYRGIVCDRCGVEVTRTKVRRERMGHIELKAPVSHIWYFKGIPSRMGLTLDMSPRALEEVIYFAAYVVIDPKDTPLEHKSIMTEREYRERLREYGYGSFVAKMGAEAIQDLLKQVDLEKEIAELKEELKTATGQKRVKAIRRLDVLDAFYKSGNKPEWMILNILPVIPPDLRPMLQLDGGRFASSDLNDLYRRVINRNNRLARLLELNAPGIIVQNEKRMLQEAVDALIDNGRRGRPITGPGSRPLKSLSHMLKGKQGRFRQNLLGKRVDFSGRSVIAVGPTLKMYQCGVPREMAIELFKPFVMREIVARDIVQNVKAAKRLVERGDERIWDILEEVIKEHPVLLNRAPTLHRLGIQAFEPVLIDGKALRLHPLVCEAYNADFDGDQMAIHVPLSEEAQAEARILMLAAEHILNPKDGKPVVTPSQDMVLGNYYLTMEEAGREGEGMVFKDRDEAVMAYRNGYVHLHSRVGIATDSLNKPWTEEQRHKVLLTTVGKILFNDIMPEGLPYLQEPNNANLTEGVPAKYFLPLGGDIKEAISNLELNPPFKKKNLGNIIAEIFKRFRTTETSALLDRMKNLGYHHSTLAGLTVGIADIPVVDDKAEIIEESHKRVEQITKQFRRGMITDDERYNAVTAEWRAAREKLEKRLIANQDPKNPIVMMMDSGARGNISNFSQLAGMRGLMAAPNGRIMELPILSNFREGLSVLEMFFSTHGARKGMTDTALKTADSGYLTRRLVDVAQDVIIREDDCGTDRGLLIRSIAEGKEMIESLEERLNGRYTKKTVKHPETGAVIIGPNELITEDKAREIVNAGVEEVTIRSVFTCNTRHGVCRHCYGINLATGDAVEVGEAVGTIAAQSIGEPGTQLTMRTFHTGGVASNTDITQGLPRVQEIFEARNPKGEAVITEVKGQVTAIEEDASTRTKKVFVKGETGEGEYVVPFTARMRVEVGGQVARGAALTEGSIQPKRLLAVRDVLSVETYLLGEVQKVYRSQGVEIGDKHIEVMVRQMIRKVRVMDPGDTDLLMGTLMDINDFTDANKDVLIAGGVPATGRPVLMGITKASLETNSFLSAASFQETTRVLTDAAIRGKKDHLLGLKENVIIGKIIPAGTGMARYRNLEPHAVNEEEYLNPPVEEEGNEETTEVVVDTAVETVEETVE</sequence>
<proteinExistence type="inferred from homology"/>